<gene>
    <name type="primary">LBD18</name>
    <name type="synonym">ASL20</name>
    <name type="ordered locus">At2g45420</name>
    <name type="ORF">F4L23.7</name>
</gene>
<dbReference type="EMBL" id="AF447891">
    <property type="protein sequence ID" value="AAL38036.1"/>
    <property type="molecule type" value="mRNA"/>
</dbReference>
<dbReference type="EMBL" id="AB473853">
    <property type="protein sequence ID" value="BAH10564.1"/>
    <property type="molecule type" value="mRNA"/>
</dbReference>
<dbReference type="EMBL" id="AC002387">
    <property type="protein sequence ID" value="AAB82622.2"/>
    <property type="molecule type" value="Genomic_DNA"/>
</dbReference>
<dbReference type="EMBL" id="CP002685">
    <property type="protein sequence ID" value="AEC10551.1"/>
    <property type="molecule type" value="Genomic_DNA"/>
</dbReference>
<dbReference type="EMBL" id="BT025716">
    <property type="protein sequence ID" value="ABF82619.1"/>
    <property type="molecule type" value="mRNA"/>
</dbReference>
<dbReference type="PIR" id="C84890">
    <property type="entry name" value="C84890"/>
</dbReference>
<dbReference type="RefSeq" id="NP_850436.1">
    <property type="nucleotide sequence ID" value="NM_180105.2"/>
</dbReference>
<dbReference type="SMR" id="O22131"/>
<dbReference type="BioGRID" id="4486">
    <property type="interactions" value="6"/>
</dbReference>
<dbReference type="FunCoup" id="O22131">
    <property type="interactions" value="54"/>
</dbReference>
<dbReference type="IntAct" id="O22131">
    <property type="interactions" value="3"/>
</dbReference>
<dbReference type="STRING" id="3702.O22131"/>
<dbReference type="iPTMnet" id="O22131"/>
<dbReference type="PaxDb" id="3702-AT2G45420.1"/>
<dbReference type="ProteomicsDB" id="237150"/>
<dbReference type="EnsemblPlants" id="AT2G45420.1">
    <property type="protein sequence ID" value="AT2G45420.1"/>
    <property type="gene ID" value="AT2G45420"/>
</dbReference>
<dbReference type="GeneID" id="819150"/>
<dbReference type="Gramene" id="AT2G45420.1">
    <property type="protein sequence ID" value="AT2G45420.1"/>
    <property type="gene ID" value="AT2G45420"/>
</dbReference>
<dbReference type="KEGG" id="ath:AT2G45420"/>
<dbReference type="Araport" id="AT2G45420"/>
<dbReference type="TAIR" id="AT2G45420">
    <property type="gene designation" value="LBD18"/>
</dbReference>
<dbReference type="eggNOG" id="ENOG502QR68">
    <property type="taxonomic scope" value="Eukaryota"/>
</dbReference>
<dbReference type="HOGENOM" id="CLU_058353_3_5_1"/>
<dbReference type="InParanoid" id="O22131"/>
<dbReference type="OMA" id="DPPTSWA"/>
<dbReference type="OrthoDB" id="668748at2759"/>
<dbReference type="PhylomeDB" id="O22131"/>
<dbReference type="PRO" id="PR:O22131"/>
<dbReference type="Proteomes" id="UP000006548">
    <property type="component" value="Chromosome 2"/>
</dbReference>
<dbReference type="ExpressionAtlas" id="O22131">
    <property type="expression patterns" value="baseline and differential"/>
</dbReference>
<dbReference type="GO" id="GO:0005634">
    <property type="term" value="C:nucleus"/>
    <property type="evidence" value="ECO:0000314"/>
    <property type="project" value="TAIR"/>
</dbReference>
<dbReference type="GO" id="GO:1990110">
    <property type="term" value="P:callus formation"/>
    <property type="evidence" value="ECO:0000315"/>
    <property type="project" value="TAIR"/>
</dbReference>
<dbReference type="GO" id="GO:0010311">
    <property type="term" value="P:lateral root formation"/>
    <property type="evidence" value="ECO:0000315"/>
    <property type="project" value="TAIR"/>
</dbReference>
<dbReference type="GO" id="GO:0045893">
    <property type="term" value="P:positive regulation of DNA-templated transcription"/>
    <property type="evidence" value="ECO:0000314"/>
    <property type="project" value="UniProtKB"/>
</dbReference>
<dbReference type="GO" id="GO:0010089">
    <property type="term" value="P:xylem development"/>
    <property type="evidence" value="ECO:0000315"/>
    <property type="project" value="TAIR"/>
</dbReference>
<dbReference type="InterPro" id="IPR004883">
    <property type="entry name" value="LOB"/>
</dbReference>
<dbReference type="InterPro" id="IPR017394">
    <property type="entry name" value="LOB_18/20"/>
</dbReference>
<dbReference type="PANTHER" id="PTHR31529">
    <property type="entry name" value="LOB DOMAIN CONTAINING PROTEIN"/>
    <property type="match status" value="1"/>
</dbReference>
<dbReference type="PANTHER" id="PTHR31529:SF61">
    <property type="entry name" value="LOB DOMAIN-CONTAINING PROTEIN 18"/>
    <property type="match status" value="1"/>
</dbReference>
<dbReference type="Pfam" id="PF03195">
    <property type="entry name" value="LOB"/>
    <property type="match status" value="1"/>
</dbReference>
<dbReference type="PIRSF" id="PIRSF038127">
    <property type="entry name" value="UCP038127_LOB"/>
    <property type="match status" value="1"/>
</dbReference>
<dbReference type="PROSITE" id="PS50891">
    <property type="entry name" value="LOB"/>
    <property type="match status" value="1"/>
</dbReference>
<name>LBD18_ARATH</name>
<comment type="function">
    <text evidence="5 6 7 9 10 12">Involved in the positive regulation of tracheary element (TE) differentiation. Involved in a positive feedback loop that maintains or promotes NAC030/VND7 expression that regulates TE differentiation-related genes (PubMed:19088331). Functions in the initiation and emergence of lateral roots, in conjunction with LBD16, downstream of ARF7 and ARF19 (PubMed:19717544, PubMed:23749813). Transcriptional activator that directly regulates EXPA14, a gene encoding a cell wall-loosening factor that promotes lateral root emergence. Activates EXPA14 by directly binding to a specific region of its promoter (PubMed:22974309). Transcriptional activator that directly regulates EXPA17, a gene encoding a cell wall-loosening factor that promotes lateral root emergence (PubMed:23872272). Acts downstream of the auxin influx carriers AUX1 and LAX1 in the regulation of lateral root initiation and development (PubMed:26059335).</text>
</comment>
<comment type="subunit">
    <text evidence="8 11">Homodimer and heterodimer with LBD16 (PubMed:23430048). Interacts with GIP1 (PubMed:24484953).</text>
</comment>
<comment type="interaction">
    <interactant intactId="EBI-15212656">
        <id>O22131</id>
    </interactant>
    <interactant intactId="EBI-15193845">
        <id>P59467</id>
        <label>LBD23</label>
    </interactant>
    <organismsDiffer>false</organismsDiffer>
    <experiments>3</experiments>
</comment>
<comment type="subcellular location">
    <subcellularLocation>
        <location evidence="5">Nucleus</location>
    </subcellularLocation>
</comment>
<comment type="tissue specificity">
    <text evidence="3 5 11">Expressed in roots, stems, leaves and flowers (PubMed:12068116, PubMed:24484953). Expressed in vascular tissues of hypocotyls, leaves, roots, developing floral organs and siliques (PubMed:19088331).</text>
</comment>
<comment type="developmental stage">
    <text evidence="6">During lateral root formation, expressed in the lateral root primordia, and the developing, emerged, and mature lateral roots.</text>
</comment>
<comment type="induction">
    <text evidence="4 6 9">By auxin.</text>
</comment>
<comment type="disruption phenotype">
    <text evidence="6">Reduced number of lateral roots.</text>
</comment>
<comment type="miscellaneous">
    <text evidence="5">Plants over-expressing LBD18 have a dwarf and bushy phenotype, with short petioles, curled downward leaves, ectopic shoots from the adaxial side of cotyledons, shrunken root tips and disorganized columella cells.</text>
</comment>
<comment type="similarity">
    <text evidence="13">Belongs to the LOB domain-containing protein family.</text>
</comment>
<reference key="1">
    <citation type="journal article" date="2002" name="Plant Physiol.">
        <title>The LATERAL ORGAN BOUNDARIES gene defines a novel, plant-specific gene family.</title>
        <authorList>
            <person name="Shuai B."/>
            <person name="Reynaga-Pena C.G."/>
            <person name="Springer P.S."/>
        </authorList>
    </citation>
    <scope>NUCLEOTIDE SEQUENCE [MRNA]</scope>
    <scope>TISSUE SPECIFICITY</scope>
    <scope>GENE FAMILY</scope>
    <scope>NOMENCLATURE</scope>
    <source>
        <strain>cv. Columbia</strain>
    </source>
</reference>
<reference key="2">
    <citation type="journal article" date="2009" name="Plant J.">
        <title>Characterization of genes in the ASYMMETRIC LEAVES2/LATERAL ORGAN BOUNDARIES (AS2/LOB) family in Arabidopsis thaliana, and functional and molecular comparisons between AS2 and other family members.</title>
        <authorList>
            <person name="Matsumura Y."/>
            <person name="Iwakawa H."/>
            <person name="Machida Y."/>
            <person name="Machida C."/>
        </authorList>
    </citation>
    <scope>NUCLEOTIDE SEQUENCE [MRNA]</scope>
    <source>
        <strain>cv. Columbia</strain>
    </source>
</reference>
<reference key="3">
    <citation type="journal article" date="1999" name="Nature">
        <title>Sequence and analysis of chromosome 2 of the plant Arabidopsis thaliana.</title>
        <authorList>
            <person name="Lin X."/>
            <person name="Kaul S."/>
            <person name="Rounsley S.D."/>
            <person name="Shea T.P."/>
            <person name="Benito M.-I."/>
            <person name="Town C.D."/>
            <person name="Fujii C.Y."/>
            <person name="Mason T.M."/>
            <person name="Bowman C.L."/>
            <person name="Barnstead M.E."/>
            <person name="Feldblyum T.V."/>
            <person name="Buell C.R."/>
            <person name="Ketchum K.A."/>
            <person name="Lee J.J."/>
            <person name="Ronning C.M."/>
            <person name="Koo H.L."/>
            <person name="Moffat K.S."/>
            <person name="Cronin L.A."/>
            <person name="Shen M."/>
            <person name="Pai G."/>
            <person name="Van Aken S."/>
            <person name="Umayam L."/>
            <person name="Tallon L.J."/>
            <person name="Gill J.E."/>
            <person name="Adams M.D."/>
            <person name="Carrera A.J."/>
            <person name="Creasy T.H."/>
            <person name="Goodman H.M."/>
            <person name="Somerville C.R."/>
            <person name="Copenhaver G.P."/>
            <person name="Preuss D."/>
            <person name="Nierman W.C."/>
            <person name="White O."/>
            <person name="Eisen J.A."/>
            <person name="Salzberg S.L."/>
            <person name="Fraser C.M."/>
            <person name="Venter J.C."/>
        </authorList>
    </citation>
    <scope>NUCLEOTIDE SEQUENCE [LARGE SCALE GENOMIC DNA]</scope>
    <source>
        <strain>cv. Columbia</strain>
    </source>
</reference>
<reference key="4">
    <citation type="journal article" date="2017" name="Plant J.">
        <title>Araport11: a complete reannotation of the Arabidopsis thaliana reference genome.</title>
        <authorList>
            <person name="Cheng C.Y."/>
            <person name="Krishnakumar V."/>
            <person name="Chan A.P."/>
            <person name="Thibaud-Nissen F."/>
            <person name="Schobel S."/>
            <person name="Town C.D."/>
        </authorList>
    </citation>
    <scope>GENOME REANNOTATION</scope>
    <source>
        <strain>cv. Columbia</strain>
    </source>
</reference>
<reference key="5">
    <citation type="submission" date="2006-06" db="EMBL/GenBank/DDBJ databases">
        <title>Arabidopsis ORF clone.</title>
        <authorList>
            <person name="Quinitio C."/>
            <person name="Chen H."/>
            <person name="Kim C.J."/>
            <person name="Shinn P."/>
            <person name="Ecker J.R."/>
        </authorList>
    </citation>
    <scope>NUCLEOTIDE SEQUENCE [LARGE SCALE MRNA]</scope>
    <source>
        <strain>cv. Columbia</strain>
    </source>
</reference>
<reference key="6">
    <citation type="journal article" date="2002" name="Plant Cell Physiol.">
        <title>The ASYMMETRIC LEAVES2 gene of Arabidopsis thaliana, required for formation of a symmetric flat leaf lamina, encodes a member of a novel family of proteins characterized by cysteine repeats and a leucine zipper.</title>
        <authorList>
            <person name="Iwakawa H."/>
            <person name="Ueno Y."/>
            <person name="Semiarti E."/>
            <person name="Onouchi H."/>
            <person name="Kojima S."/>
            <person name="Tsukaya H."/>
            <person name="Hasebe M."/>
            <person name="Soma T."/>
            <person name="Ikezaki M."/>
            <person name="Machida C."/>
            <person name="Machida Y."/>
        </authorList>
    </citation>
    <scope>GENE FAMILY</scope>
    <scope>NOMENCLATURE</scope>
</reference>
<reference key="7">
    <citation type="journal article" date="2005" name="Plant Cell">
        <title>Functional genomic analysis of the AUXIN RESPONSE FACTOR gene family members in Arabidopsis thaliana: unique and overlapping functions of ARF7 and ARF19.</title>
        <authorList>
            <person name="Okushima Y."/>
            <person name="Overvoorde P.J."/>
            <person name="Arima K."/>
            <person name="Alonso J.M."/>
            <person name="Chan A."/>
            <person name="Chang C."/>
            <person name="Ecker J.R."/>
            <person name="Hughes B."/>
            <person name="Lui A."/>
            <person name="Nguyen D."/>
            <person name="Onodera C."/>
            <person name="Quach H."/>
            <person name="Smith A."/>
            <person name="Yu G."/>
            <person name="Theologis A."/>
        </authorList>
    </citation>
    <scope>INDUCTION BY AUXIN</scope>
</reference>
<reference key="8">
    <citation type="journal article" date="2008" name="Plant Cell">
        <title>ASYMMETRIC LEAVES2-LIKE19/LATERAL ORGAN BOUNDARIES DOMAIN30 and ASL20/LBD18 regulate tracheary element differentiation in Arabidopsis.</title>
        <authorList>
            <person name="Soyano T."/>
            <person name="Thitamadee S."/>
            <person name="Machida Y."/>
            <person name="Chua N.-H."/>
        </authorList>
    </citation>
    <scope>FUNCTION</scope>
    <scope>SUBCELLULAR LOCATION</scope>
    <scope>TISSUE SPECIFICITY</scope>
</reference>
<reference key="9">
    <citation type="journal article" date="2009" name="Plant Physiol.">
        <title>LBD18/ASL20 regulates lateral root formation in combination with LBD16/ASL18 downstream of ARF7 and ARF19 in Arabidopsis.</title>
        <authorList>
            <person name="Lee H.W."/>
            <person name="Kim N.Y."/>
            <person name="Lee D.J."/>
            <person name="Kim J."/>
        </authorList>
    </citation>
    <scope>FUNCTION</scope>
    <scope>DEVELOPMENTAL STAGE</scope>
    <scope>INDUCTION BY AUXIN</scope>
    <scope>DISRUPTION PHENOTYPE</scope>
</reference>
<reference key="10">
    <citation type="journal article" date="2013" name="Mol. Plant">
        <title>The conserved proline residue in the LOB domain of LBD18 is critical for DNA-binding and biological function.</title>
        <authorList>
            <person name="Lee H.W."/>
            <person name="Kim M.J."/>
            <person name="Park M.Y."/>
            <person name="Han K.H."/>
            <person name="Kim J."/>
        </authorList>
    </citation>
    <scope>SUBUNIT</scope>
    <scope>MUTAGENESIS OF PRO-109</scope>
</reference>
<reference key="11">
    <citation type="journal article" date="2013" name="Plant Cell Physiol.">
        <title>The AP2/EREBP gene PUCHI Co-Acts with LBD16/ASL18 and LBD18/ASL20 downstream of ARF7 and ARF19 to regulate lateral root development in Arabidopsis.</title>
        <authorList>
            <person name="Kang N.Y."/>
            <person name="Lee H.W."/>
            <person name="Kim J."/>
        </authorList>
    </citation>
    <scope>FUNCTION</scope>
    <scope>INDUCTION BY AUXIN</scope>
</reference>
<reference key="12">
    <citation type="journal article" date="2013" name="Plant Cell Physiol.">
        <title>EXPANSINA17 up-regulated by LBD18/ASL20 promotes lateral root formation during the auxin response.</title>
        <authorList>
            <person name="Lee H.W."/>
            <person name="Kim J."/>
        </authorList>
    </citation>
    <scope>FUNCTION</scope>
</reference>
<reference key="13">
    <citation type="journal article" date="2013" name="Plant J.">
        <title>LBD18 acts as a transcriptional activator that directly binds to the EXPANSIN14 promoter in promoting lateral root emergence of Arabidopsis.</title>
        <authorList>
            <person name="Lee H.W."/>
            <person name="Kim M.J."/>
            <person name="Kim N.Y."/>
            <person name="Lee S.H."/>
            <person name="Kim J."/>
        </authorList>
    </citation>
    <scope>FUNCTION</scope>
</reference>
<reference key="14">
    <citation type="journal article" date="2014" name="J. Plant Physiol.">
        <title>GIP1 may act as a coactivator that enhances transcriptional activity of LBD18 in Arabidopsis.</title>
        <authorList>
            <person name="Lee H.W."/>
            <person name="Park J.H."/>
            <person name="Park M.Y."/>
            <person name="Kim J."/>
        </authorList>
    </citation>
    <scope>INTERACTION WITH GIP1</scope>
    <scope>MUTAGENESIS OF PRO-109</scope>
</reference>
<reference key="15">
    <citation type="journal article" date="2015" name="Plant Physiol.">
        <title>Lateral organ boundaries domain16 and 18 act downstream of the AUXIN1 and LIKE-AUXIN3 auxin influx carriers to control lateral root development in Arabidopsis.</title>
        <authorList>
            <person name="Lee H.W."/>
            <person name="Cho C."/>
            <person name="Kim J."/>
        </authorList>
    </citation>
    <scope>FUNCTION</scope>
</reference>
<evidence type="ECO:0000255" key="1">
    <source>
        <dbReference type="PROSITE-ProRule" id="PRU00291"/>
    </source>
</evidence>
<evidence type="ECO:0000256" key="2">
    <source>
        <dbReference type="SAM" id="MobiDB-lite"/>
    </source>
</evidence>
<evidence type="ECO:0000269" key="3">
    <source>
    </source>
</evidence>
<evidence type="ECO:0000269" key="4">
    <source>
    </source>
</evidence>
<evidence type="ECO:0000269" key="5">
    <source>
    </source>
</evidence>
<evidence type="ECO:0000269" key="6">
    <source>
    </source>
</evidence>
<evidence type="ECO:0000269" key="7">
    <source>
    </source>
</evidence>
<evidence type="ECO:0000269" key="8">
    <source>
    </source>
</evidence>
<evidence type="ECO:0000269" key="9">
    <source>
    </source>
</evidence>
<evidence type="ECO:0000269" key="10">
    <source>
    </source>
</evidence>
<evidence type="ECO:0000269" key="11">
    <source>
    </source>
</evidence>
<evidence type="ECO:0000269" key="12">
    <source>
    </source>
</evidence>
<evidence type="ECO:0000305" key="13"/>
<keyword id="KW-0539">Nucleus</keyword>
<keyword id="KW-1185">Reference proteome</keyword>
<feature type="chain" id="PRO_0000132269" description="LOB domain-containing protein 18">
    <location>
        <begin position="1"/>
        <end position="262"/>
    </location>
</feature>
<feature type="domain" description="LOB" evidence="1">
    <location>
        <begin position="36"/>
        <end position="138"/>
    </location>
</feature>
<feature type="region of interest" description="Disordered" evidence="2">
    <location>
        <begin position="223"/>
        <end position="262"/>
    </location>
</feature>
<feature type="mutagenesis site" description="Loss of function in lateral root formation. Abolishes DNA-binding activity. Abolishes interaction with GIP1." evidence="8 11">
    <original>P</original>
    <variation>L</variation>
    <location>
        <position position="109"/>
    </location>
</feature>
<sequence length="262" mass="27219">MSGGGNTITAVGGGGGGCGGGGSSGGGGSSGGGGGGPCGACKFLRRKCVPGCIFAPYFDSEQGSAYFAAVHKVFGASNVSKLLLHIPVHRRSDAVVTICYEAQARIRDPIYGCVAHIFALQQQVVNLQAEVSYLQAHLASLELPQPQTRPQPMPQPQPLFFTPPPPLAITDLPASVSPLPSTYDLASIFDQTTSSSAWATQQRRFIDPRHQYGVSSSSSSVAVGLGGENSHDLQALAHELLHRQGSPPPAATDHSPSRTMSR</sequence>
<accession>O22131</accession>
<accession>B7XG74</accession>
<accession>Q1ECL8</accession>
<accession>Q8W1D7</accession>
<organism>
    <name type="scientific">Arabidopsis thaliana</name>
    <name type="common">Mouse-ear cress</name>
    <dbReference type="NCBI Taxonomy" id="3702"/>
    <lineage>
        <taxon>Eukaryota</taxon>
        <taxon>Viridiplantae</taxon>
        <taxon>Streptophyta</taxon>
        <taxon>Embryophyta</taxon>
        <taxon>Tracheophyta</taxon>
        <taxon>Spermatophyta</taxon>
        <taxon>Magnoliopsida</taxon>
        <taxon>eudicotyledons</taxon>
        <taxon>Gunneridae</taxon>
        <taxon>Pentapetalae</taxon>
        <taxon>rosids</taxon>
        <taxon>malvids</taxon>
        <taxon>Brassicales</taxon>
        <taxon>Brassicaceae</taxon>
        <taxon>Camelineae</taxon>
        <taxon>Arabidopsis</taxon>
    </lineage>
</organism>
<proteinExistence type="evidence at protein level"/>
<protein>
    <recommendedName>
        <fullName>LOB domain-containing protein 18</fullName>
    </recommendedName>
    <alternativeName>
        <fullName>ASYMMETRIC LEAVES 2-like protein 20</fullName>
        <shortName>AS2-like protein 20</shortName>
    </alternativeName>
</protein>